<name>HUTH_SALDC</name>
<feature type="chain" id="PRO_1000100447" description="Histidine ammonia-lyase">
    <location>
        <begin position="1"/>
        <end position="506"/>
    </location>
</feature>
<feature type="modified residue" description="2,3-didehydroalanine (Ser)" evidence="1">
    <location>
        <position position="144"/>
    </location>
</feature>
<feature type="cross-link" description="5-imidazolinone (Ala-Gly)" evidence="1">
    <location>
        <begin position="143"/>
        <end position="145"/>
    </location>
</feature>
<accession>B5FP58</accession>
<dbReference type="EC" id="4.3.1.3" evidence="1"/>
<dbReference type="EMBL" id="CP001144">
    <property type="protein sequence ID" value="ACH74277.1"/>
    <property type="molecule type" value="Genomic_DNA"/>
</dbReference>
<dbReference type="RefSeq" id="WP_001095241.1">
    <property type="nucleotide sequence ID" value="NC_011205.1"/>
</dbReference>
<dbReference type="SMR" id="B5FP58"/>
<dbReference type="KEGG" id="sed:SeD_A0886"/>
<dbReference type="HOGENOM" id="CLU_014801_4_0_6"/>
<dbReference type="UniPathway" id="UPA00379">
    <property type="reaction ID" value="UER00549"/>
</dbReference>
<dbReference type="Proteomes" id="UP000008322">
    <property type="component" value="Chromosome"/>
</dbReference>
<dbReference type="GO" id="GO:0005737">
    <property type="term" value="C:cytoplasm"/>
    <property type="evidence" value="ECO:0007669"/>
    <property type="project" value="UniProtKB-SubCell"/>
</dbReference>
<dbReference type="GO" id="GO:0004397">
    <property type="term" value="F:histidine ammonia-lyase activity"/>
    <property type="evidence" value="ECO:0007669"/>
    <property type="project" value="UniProtKB-UniRule"/>
</dbReference>
<dbReference type="GO" id="GO:0019556">
    <property type="term" value="P:L-histidine catabolic process to glutamate and formamide"/>
    <property type="evidence" value="ECO:0007669"/>
    <property type="project" value="UniProtKB-UniPathway"/>
</dbReference>
<dbReference type="GO" id="GO:0019557">
    <property type="term" value="P:L-histidine catabolic process to glutamate and formate"/>
    <property type="evidence" value="ECO:0007669"/>
    <property type="project" value="UniProtKB-UniPathway"/>
</dbReference>
<dbReference type="CDD" id="cd00332">
    <property type="entry name" value="PAL-HAL"/>
    <property type="match status" value="1"/>
</dbReference>
<dbReference type="FunFam" id="1.10.275.10:FF:000005">
    <property type="entry name" value="Histidine ammonia-lyase"/>
    <property type="match status" value="1"/>
</dbReference>
<dbReference type="FunFam" id="1.20.200.10:FF:000003">
    <property type="entry name" value="Histidine ammonia-lyase"/>
    <property type="match status" value="1"/>
</dbReference>
<dbReference type="Gene3D" id="1.20.200.10">
    <property type="entry name" value="Fumarase/aspartase (Central domain)"/>
    <property type="match status" value="1"/>
</dbReference>
<dbReference type="Gene3D" id="1.10.275.10">
    <property type="entry name" value="Fumarase/aspartase (N-terminal domain)"/>
    <property type="match status" value="1"/>
</dbReference>
<dbReference type="HAMAP" id="MF_00229">
    <property type="entry name" value="His_ammonia_lyase"/>
    <property type="match status" value="1"/>
</dbReference>
<dbReference type="InterPro" id="IPR001106">
    <property type="entry name" value="Aromatic_Lyase"/>
</dbReference>
<dbReference type="InterPro" id="IPR024083">
    <property type="entry name" value="Fumarase/histidase_N"/>
</dbReference>
<dbReference type="InterPro" id="IPR005921">
    <property type="entry name" value="HutH"/>
</dbReference>
<dbReference type="InterPro" id="IPR008948">
    <property type="entry name" value="L-Aspartase-like"/>
</dbReference>
<dbReference type="InterPro" id="IPR022313">
    <property type="entry name" value="Phe/His_NH3-lyase_AS"/>
</dbReference>
<dbReference type="NCBIfam" id="TIGR01225">
    <property type="entry name" value="hutH"/>
    <property type="match status" value="1"/>
</dbReference>
<dbReference type="NCBIfam" id="NF006871">
    <property type="entry name" value="PRK09367.1"/>
    <property type="match status" value="1"/>
</dbReference>
<dbReference type="PANTHER" id="PTHR10362">
    <property type="entry name" value="HISTIDINE AMMONIA-LYASE"/>
    <property type="match status" value="1"/>
</dbReference>
<dbReference type="Pfam" id="PF00221">
    <property type="entry name" value="Lyase_aromatic"/>
    <property type="match status" value="1"/>
</dbReference>
<dbReference type="SUPFAM" id="SSF48557">
    <property type="entry name" value="L-aspartase-like"/>
    <property type="match status" value="1"/>
</dbReference>
<dbReference type="PROSITE" id="PS00488">
    <property type="entry name" value="PAL_HISTIDASE"/>
    <property type="match status" value="1"/>
</dbReference>
<evidence type="ECO:0000255" key="1">
    <source>
        <dbReference type="HAMAP-Rule" id="MF_00229"/>
    </source>
</evidence>
<sequence length="506" mass="53827">MNTMTLTPGQLSLSQLYDVWRHPVQLRLDASAIDGINASVACVNDIVAEGRTAYGINTGFGLLAQTRIADEDLQNLQRSLVLSHAAGVGDPLDDAMVRLIMVLKINSLARGFSGIRLSVIEALIALVNAGVYPLIPAKGSVGASGDLAPLAHLSLTLLGEGKARWQGEWLPAQTALKKAGLEPVALAAKEGLALLNGTQASTAFALRGLFEAQELFASAVVCGALTTEAVLGSRRPFDARIHAARGQQGQIDVARLFRHLLTDTSAIAESHHHCHKVQDPYSLRCQPQVMGACLTQLRQTKEVLLAEANAVSDNPLVFADAGEVISGGNFHAEPVAMAADNLALAIAEIGALSERRIALMMDKHMSQLPPFLVKNGGVNSGFMIAQVTAAALASENKALAHPHSVDSLPTSANQEDHVSMAPAAGRRLWEMAANTRGIIAVEWLAACQGIDLREGLTSSPLLEQARQTLREQVAHYTQDRFFAPDIECATALLAQGALQRLVPDFM</sequence>
<proteinExistence type="inferred from homology"/>
<protein>
    <recommendedName>
        <fullName evidence="1">Histidine ammonia-lyase</fullName>
        <shortName evidence="1">Histidase</shortName>
        <ecNumber evidence="1">4.3.1.3</ecNumber>
    </recommendedName>
</protein>
<reference key="1">
    <citation type="journal article" date="2011" name="J. Bacteriol.">
        <title>Comparative genomics of 28 Salmonella enterica isolates: evidence for CRISPR-mediated adaptive sublineage evolution.</title>
        <authorList>
            <person name="Fricke W.F."/>
            <person name="Mammel M.K."/>
            <person name="McDermott P.F."/>
            <person name="Tartera C."/>
            <person name="White D.G."/>
            <person name="Leclerc J.E."/>
            <person name="Ravel J."/>
            <person name="Cebula T.A."/>
        </authorList>
    </citation>
    <scope>NUCLEOTIDE SEQUENCE [LARGE SCALE GENOMIC DNA]</scope>
    <source>
        <strain>CT_02021853</strain>
    </source>
</reference>
<organism>
    <name type="scientific">Salmonella dublin (strain CT_02021853)</name>
    <dbReference type="NCBI Taxonomy" id="439851"/>
    <lineage>
        <taxon>Bacteria</taxon>
        <taxon>Pseudomonadati</taxon>
        <taxon>Pseudomonadota</taxon>
        <taxon>Gammaproteobacteria</taxon>
        <taxon>Enterobacterales</taxon>
        <taxon>Enterobacteriaceae</taxon>
        <taxon>Salmonella</taxon>
    </lineage>
</organism>
<comment type="catalytic activity">
    <reaction evidence="1">
        <text>L-histidine = trans-urocanate + NH4(+)</text>
        <dbReference type="Rhea" id="RHEA:21232"/>
        <dbReference type="ChEBI" id="CHEBI:17771"/>
        <dbReference type="ChEBI" id="CHEBI:28938"/>
        <dbReference type="ChEBI" id="CHEBI:57595"/>
        <dbReference type="EC" id="4.3.1.3"/>
    </reaction>
</comment>
<comment type="pathway">
    <text evidence="1">Amino-acid degradation; L-histidine degradation into L-glutamate; N-formimidoyl-L-glutamate from L-histidine: step 1/3.</text>
</comment>
<comment type="subcellular location">
    <subcellularLocation>
        <location evidence="1">Cytoplasm</location>
    </subcellularLocation>
</comment>
<comment type="PTM">
    <text evidence="1">Contains an active site 4-methylidene-imidazol-5-one (MIO), which is formed autocatalytically by cyclization and dehydration of residues Ala-Ser-Gly.</text>
</comment>
<comment type="similarity">
    <text evidence="1">Belongs to the PAL/histidase family.</text>
</comment>
<gene>
    <name evidence="1" type="primary">hutH</name>
    <name type="ordered locus">SeD_A0886</name>
</gene>
<keyword id="KW-0963">Cytoplasm</keyword>
<keyword id="KW-0369">Histidine metabolism</keyword>
<keyword id="KW-0456">Lyase</keyword>